<dbReference type="EC" id="3.1.3.5" evidence="1"/>
<dbReference type="EC" id="3.1.3.6" evidence="1"/>
<dbReference type="EC" id="3.6.1.11" evidence="1"/>
<dbReference type="EMBL" id="AP009240">
    <property type="protein sequence ID" value="BAG78520.1"/>
    <property type="molecule type" value="Genomic_DNA"/>
</dbReference>
<dbReference type="RefSeq" id="WP_001295182.1">
    <property type="nucleotide sequence ID" value="NC_011415.1"/>
</dbReference>
<dbReference type="SMR" id="B6I6D4"/>
<dbReference type="GeneID" id="93779262"/>
<dbReference type="KEGG" id="ecy:ECSE_2996"/>
<dbReference type="HOGENOM" id="CLU_045192_1_2_6"/>
<dbReference type="Proteomes" id="UP000008199">
    <property type="component" value="Chromosome"/>
</dbReference>
<dbReference type="GO" id="GO:0005737">
    <property type="term" value="C:cytoplasm"/>
    <property type="evidence" value="ECO:0007669"/>
    <property type="project" value="UniProtKB-SubCell"/>
</dbReference>
<dbReference type="GO" id="GO:0008254">
    <property type="term" value="F:3'-nucleotidase activity"/>
    <property type="evidence" value="ECO:0007669"/>
    <property type="project" value="UniProtKB-UniRule"/>
</dbReference>
<dbReference type="GO" id="GO:0008253">
    <property type="term" value="F:5'-nucleotidase activity"/>
    <property type="evidence" value="ECO:0007669"/>
    <property type="project" value="UniProtKB-UniRule"/>
</dbReference>
<dbReference type="GO" id="GO:0004309">
    <property type="term" value="F:exopolyphosphatase activity"/>
    <property type="evidence" value="ECO:0007669"/>
    <property type="project" value="UniProtKB-UniRule"/>
</dbReference>
<dbReference type="GO" id="GO:0046872">
    <property type="term" value="F:metal ion binding"/>
    <property type="evidence" value="ECO:0007669"/>
    <property type="project" value="UniProtKB-UniRule"/>
</dbReference>
<dbReference type="GO" id="GO:0000166">
    <property type="term" value="F:nucleotide binding"/>
    <property type="evidence" value="ECO:0007669"/>
    <property type="project" value="UniProtKB-KW"/>
</dbReference>
<dbReference type="FunFam" id="3.40.1210.10:FF:000001">
    <property type="entry name" value="5'/3'-nucleotidase SurE"/>
    <property type="match status" value="1"/>
</dbReference>
<dbReference type="Gene3D" id="3.40.1210.10">
    <property type="entry name" value="Survival protein SurE-like phosphatase/nucleotidase"/>
    <property type="match status" value="1"/>
</dbReference>
<dbReference type="HAMAP" id="MF_00060">
    <property type="entry name" value="SurE"/>
    <property type="match status" value="1"/>
</dbReference>
<dbReference type="InterPro" id="IPR030048">
    <property type="entry name" value="SurE"/>
</dbReference>
<dbReference type="InterPro" id="IPR002828">
    <property type="entry name" value="SurE-like_Pase/nucleotidase"/>
</dbReference>
<dbReference type="InterPro" id="IPR036523">
    <property type="entry name" value="SurE-like_sf"/>
</dbReference>
<dbReference type="NCBIfam" id="NF001488">
    <property type="entry name" value="PRK00346.1-1"/>
    <property type="match status" value="1"/>
</dbReference>
<dbReference type="NCBIfam" id="NF001489">
    <property type="entry name" value="PRK00346.1-3"/>
    <property type="match status" value="1"/>
</dbReference>
<dbReference type="NCBIfam" id="NF001490">
    <property type="entry name" value="PRK00346.1-4"/>
    <property type="match status" value="1"/>
</dbReference>
<dbReference type="NCBIfam" id="TIGR00087">
    <property type="entry name" value="surE"/>
    <property type="match status" value="1"/>
</dbReference>
<dbReference type="PANTHER" id="PTHR30457">
    <property type="entry name" value="5'-NUCLEOTIDASE SURE"/>
    <property type="match status" value="1"/>
</dbReference>
<dbReference type="PANTHER" id="PTHR30457:SF12">
    <property type="entry name" value="5'_3'-NUCLEOTIDASE SURE"/>
    <property type="match status" value="1"/>
</dbReference>
<dbReference type="Pfam" id="PF01975">
    <property type="entry name" value="SurE"/>
    <property type="match status" value="1"/>
</dbReference>
<dbReference type="SUPFAM" id="SSF64167">
    <property type="entry name" value="SurE-like"/>
    <property type="match status" value="1"/>
</dbReference>
<sequence>MRILLSNDDGVHAPGIQTLAKALREFADVQVVAPDRNRSGASNSLTLESSLRTFTFENGDIAVQMGTPTDCVYLGVNALMRPRPDIVVSGINAGPNLGDDVIYSGTVAAAMEGRHLGFPALAVSLDGHKHYDTAAAVTCSILRALCKEPLRTGRILNINVPDLPLDQIKGIRVTRCGTRHPADQVIPQQDPRGNTLYWIGPPGGKCDAGPGTDFAAVDEGYVSITPLHVDLTAHSAQDVVSDWLNSVGVGTQW</sequence>
<name>SURE_ECOSE</name>
<proteinExistence type="inferred from homology"/>
<comment type="function">
    <text evidence="1">Nucleotidase with a broad substrate specificity as it can dephosphorylate various ribo- and deoxyribonucleoside 5'-monophosphates and ribonucleoside 3'-monophosphates with highest affinity to 3'-AMP. Also hydrolyzes polyphosphate (exopolyphosphatase activity) with the preference for short-chain-length substrates (P20-25). Might be involved in the regulation of dNTP and NTP pools, and in the turnover of 3'-mononucleotides produced by numerous intracellular RNases (T1, T2, and F) during the degradation of various RNAs.</text>
</comment>
<comment type="catalytic activity">
    <reaction evidence="1">
        <text>a ribonucleoside 5'-phosphate + H2O = a ribonucleoside + phosphate</text>
        <dbReference type="Rhea" id="RHEA:12484"/>
        <dbReference type="ChEBI" id="CHEBI:15377"/>
        <dbReference type="ChEBI" id="CHEBI:18254"/>
        <dbReference type="ChEBI" id="CHEBI:43474"/>
        <dbReference type="ChEBI" id="CHEBI:58043"/>
        <dbReference type="EC" id="3.1.3.5"/>
    </reaction>
</comment>
<comment type="catalytic activity">
    <reaction evidence="1">
        <text>a ribonucleoside 3'-phosphate + H2O = a ribonucleoside + phosphate</text>
        <dbReference type="Rhea" id="RHEA:10144"/>
        <dbReference type="ChEBI" id="CHEBI:13197"/>
        <dbReference type="ChEBI" id="CHEBI:15377"/>
        <dbReference type="ChEBI" id="CHEBI:18254"/>
        <dbReference type="ChEBI" id="CHEBI:43474"/>
        <dbReference type="EC" id="3.1.3.6"/>
    </reaction>
</comment>
<comment type="catalytic activity">
    <reaction evidence="1">
        <text>[phosphate](n) + H2O = [phosphate](n-1) + phosphate + H(+)</text>
        <dbReference type="Rhea" id="RHEA:21528"/>
        <dbReference type="Rhea" id="RHEA-COMP:9859"/>
        <dbReference type="Rhea" id="RHEA-COMP:14279"/>
        <dbReference type="ChEBI" id="CHEBI:15377"/>
        <dbReference type="ChEBI" id="CHEBI:15378"/>
        <dbReference type="ChEBI" id="CHEBI:16838"/>
        <dbReference type="ChEBI" id="CHEBI:43474"/>
        <dbReference type="EC" id="3.6.1.11"/>
    </reaction>
</comment>
<comment type="cofactor">
    <cofactor evidence="1">
        <name>a divalent metal cation</name>
        <dbReference type="ChEBI" id="CHEBI:60240"/>
    </cofactor>
    <text evidence="1">Binds 1 divalent metal cation per subunit.</text>
</comment>
<comment type="subcellular location">
    <subcellularLocation>
        <location evidence="1">Cytoplasm</location>
    </subcellularLocation>
</comment>
<comment type="similarity">
    <text evidence="1">Belongs to the SurE nucleotidase family.</text>
</comment>
<reference key="1">
    <citation type="journal article" date="2008" name="DNA Res.">
        <title>Complete genome sequence and comparative analysis of the wild-type commensal Escherichia coli strain SE11 isolated from a healthy adult.</title>
        <authorList>
            <person name="Oshima K."/>
            <person name="Toh H."/>
            <person name="Ogura Y."/>
            <person name="Sasamoto H."/>
            <person name="Morita H."/>
            <person name="Park S.-H."/>
            <person name="Ooka T."/>
            <person name="Iyoda S."/>
            <person name="Taylor T.D."/>
            <person name="Hayashi T."/>
            <person name="Itoh K."/>
            <person name="Hattori M."/>
        </authorList>
    </citation>
    <scope>NUCLEOTIDE SEQUENCE [LARGE SCALE GENOMIC DNA]</scope>
    <source>
        <strain>SE11</strain>
    </source>
</reference>
<evidence type="ECO:0000255" key="1">
    <source>
        <dbReference type="HAMAP-Rule" id="MF_00060"/>
    </source>
</evidence>
<accession>B6I6D4</accession>
<keyword id="KW-0963">Cytoplasm</keyword>
<keyword id="KW-0378">Hydrolase</keyword>
<keyword id="KW-0479">Metal-binding</keyword>
<keyword id="KW-0547">Nucleotide-binding</keyword>
<feature type="chain" id="PRO_1000092003" description="5'/3'-nucleotidase SurE">
    <location>
        <begin position="1"/>
        <end position="253"/>
    </location>
</feature>
<feature type="binding site" evidence="1">
    <location>
        <position position="8"/>
    </location>
    <ligand>
        <name>a divalent metal cation</name>
        <dbReference type="ChEBI" id="CHEBI:60240"/>
    </ligand>
</feature>
<feature type="binding site" evidence="1">
    <location>
        <position position="9"/>
    </location>
    <ligand>
        <name>a divalent metal cation</name>
        <dbReference type="ChEBI" id="CHEBI:60240"/>
    </ligand>
</feature>
<feature type="binding site" evidence="1">
    <location>
        <position position="39"/>
    </location>
    <ligand>
        <name>a divalent metal cation</name>
        <dbReference type="ChEBI" id="CHEBI:60240"/>
    </ligand>
</feature>
<feature type="binding site" evidence="1">
    <location>
        <position position="92"/>
    </location>
    <ligand>
        <name>a divalent metal cation</name>
        <dbReference type="ChEBI" id="CHEBI:60240"/>
    </ligand>
</feature>
<protein>
    <recommendedName>
        <fullName evidence="1">5'/3'-nucleotidase SurE</fullName>
        <ecNumber evidence="1">3.1.3.5</ecNumber>
        <ecNumber evidence="1">3.1.3.6</ecNumber>
    </recommendedName>
    <alternativeName>
        <fullName evidence="1">Exopolyphosphatase</fullName>
        <ecNumber evidence="1">3.6.1.11</ecNumber>
    </alternativeName>
    <alternativeName>
        <fullName evidence="1">Nucleoside monophosphate phosphohydrolase</fullName>
    </alternativeName>
</protein>
<gene>
    <name evidence="1" type="primary">surE</name>
    <name type="ordered locus">ECSE_2996</name>
</gene>
<organism>
    <name type="scientific">Escherichia coli (strain SE11)</name>
    <dbReference type="NCBI Taxonomy" id="409438"/>
    <lineage>
        <taxon>Bacteria</taxon>
        <taxon>Pseudomonadati</taxon>
        <taxon>Pseudomonadota</taxon>
        <taxon>Gammaproteobacteria</taxon>
        <taxon>Enterobacterales</taxon>
        <taxon>Enterobacteriaceae</taxon>
        <taxon>Escherichia</taxon>
    </lineage>
</organism>